<keyword id="KW-0240">DNA-directed RNA polymerase</keyword>
<keyword id="KW-0460">Magnesium</keyword>
<keyword id="KW-0479">Metal-binding</keyword>
<keyword id="KW-0548">Nucleotidyltransferase</keyword>
<keyword id="KW-1185">Reference proteome</keyword>
<keyword id="KW-0804">Transcription</keyword>
<keyword id="KW-0808">Transferase</keyword>
<keyword id="KW-0862">Zinc</keyword>
<reference key="1">
    <citation type="submission" date="2005-08" db="EMBL/GenBank/DDBJ databases">
        <title>Complete sequence of chromosome 1 of Nitrosospira multiformis ATCC 25196.</title>
        <authorList>
            <person name="Copeland A."/>
            <person name="Lucas S."/>
            <person name="Lapidus A."/>
            <person name="Barry K."/>
            <person name="Detter J.C."/>
            <person name="Glavina T."/>
            <person name="Hammon N."/>
            <person name="Israni S."/>
            <person name="Pitluck S."/>
            <person name="Chain P."/>
            <person name="Malfatti S."/>
            <person name="Shin M."/>
            <person name="Vergez L."/>
            <person name="Schmutz J."/>
            <person name="Larimer F."/>
            <person name="Land M."/>
            <person name="Hauser L."/>
            <person name="Kyrpides N."/>
            <person name="Lykidis A."/>
            <person name="Richardson P."/>
        </authorList>
    </citation>
    <scope>NUCLEOTIDE SEQUENCE [LARGE SCALE GENOMIC DNA]</scope>
    <source>
        <strain>ATCC 25196 / NCIMB 11849 / C 71</strain>
    </source>
</reference>
<protein>
    <recommendedName>
        <fullName evidence="1">DNA-directed RNA polymerase subunit beta'</fullName>
        <shortName evidence="1">RNAP subunit beta'</shortName>
        <ecNumber evidence="1">2.7.7.6</ecNumber>
    </recommendedName>
    <alternativeName>
        <fullName evidence="1">RNA polymerase subunit beta'</fullName>
    </alternativeName>
    <alternativeName>
        <fullName evidence="1">Transcriptase subunit beta'</fullName>
    </alternativeName>
</protein>
<organism>
    <name type="scientific">Nitrosospira multiformis (strain ATCC 25196 / NCIMB 11849 / C 71)</name>
    <dbReference type="NCBI Taxonomy" id="323848"/>
    <lineage>
        <taxon>Bacteria</taxon>
        <taxon>Pseudomonadati</taxon>
        <taxon>Pseudomonadota</taxon>
        <taxon>Betaproteobacteria</taxon>
        <taxon>Nitrosomonadales</taxon>
        <taxon>Nitrosomonadaceae</taxon>
        <taxon>Nitrosospira</taxon>
    </lineage>
</organism>
<comment type="function">
    <text evidence="1">DNA-dependent RNA polymerase catalyzes the transcription of DNA into RNA using the four ribonucleoside triphosphates as substrates.</text>
</comment>
<comment type="catalytic activity">
    <reaction evidence="1">
        <text>RNA(n) + a ribonucleoside 5'-triphosphate = RNA(n+1) + diphosphate</text>
        <dbReference type="Rhea" id="RHEA:21248"/>
        <dbReference type="Rhea" id="RHEA-COMP:14527"/>
        <dbReference type="Rhea" id="RHEA-COMP:17342"/>
        <dbReference type="ChEBI" id="CHEBI:33019"/>
        <dbReference type="ChEBI" id="CHEBI:61557"/>
        <dbReference type="ChEBI" id="CHEBI:140395"/>
        <dbReference type="EC" id="2.7.7.6"/>
    </reaction>
</comment>
<comment type="cofactor">
    <cofactor evidence="1">
        <name>Mg(2+)</name>
        <dbReference type="ChEBI" id="CHEBI:18420"/>
    </cofactor>
    <text evidence="1">Binds 1 Mg(2+) ion per subunit.</text>
</comment>
<comment type="cofactor">
    <cofactor evidence="1">
        <name>Zn(2+)</name>
        <dbReference type="ChEBI" id="CHEBI:29105"/>
    </cofactor>
    <text evidence="1">Binds 2 Zn(2+) ions per subunit.</text>
</comment>
<comment type="subunit">
    <text evidence="1">The RNAP catalytic core consists of 2 alpha, 1 beta, 1 beta' and 1 omega subunit. When a sigma factor is associated with the core the holoenzyme is formed, which can initiate transcription.</text>
</comment>
<comment type="similarity">
    <text evidence="1">Belongs to the RNA polymerase beta' chain family.</text>
</comment>
<accession>Q2YB04</accession>
<dbReference type="EC" id="2.7.7.6" evidence="1"/>
<dbReference type="EMBL" id="CP000103">
    <property type="protein sequence ID" value="ABB74067.1"/>
    <property type="molecule type" value="Genomic_DNA"/>
</dbReference>
<dbReference type="RefSeq" id="WP_011380117.1">
    <property type="nucleotide sequence ID" value="NC_007614.1"/>
</dbReference>
<dbReference type="SMR" id="Q2YB04"/>
<dbReference type="STRING" id="323848.Nmul_A0760"/>
<dbReference type="KEGG" id="nmu:Nmul_A0760"/>
<dbReference type="eggNOG" id="COG0086">
    <property type="taxonomic scope" value="Bacteria"/>
</dbReference>
<dbReference type="HOGENOM" id="CLU_000524_3_1_4"/>
<dbReference type="OrthoDB" id="9815296at2"/>
<dbReference type="Proteomes" id="UP000002718">
    <property type="component" value="Chromosome"/>
</dbReference>
<dbReference type="GO" id="GO:0000428">
    <property type="term" value="C:DNA-directed RNA polymerase complex"/>
    <property type="evidence" value="ECO:0007669"/>
    <property type="project" value="UniProtKB-KW"/>
</dbReference>
<dbReference type="GO" id="GO:0003677">
    <property type="term" value="F:DNA binding"/>
    <property type="evidence" value="ECO:0007669"/>
    <property type="project" value="UniProtKB-UniRule"/>
</dbReference>
<dbReference type="GO" id="GO:0003899">
    <property type="term" value="F:DNA-directed RNA polymerase activity"/>
    <property type="evidence" value="ECO:0007669"/>
    <property type="project" value="UniProtKB-UniRule"/>
</dbReference>
<dbReference type="GO" id="GO:0000287">
    <property type="term" value="F:magnesium ion binding"/>
    <property type="evidence" value="ECO:0007669"/>
    <property type="project" value="UniProtKB-UniRule"/>
</dbReference>
<dbReference type="GO" id="GO:0008270">
    <property type="term" value="F:zinc ion binding"/>
    <property type="evidence" value="ECO:0007669"/>
    <property type="project" value="UniProtKB-UniRule"/>
</dbReference>
<dbReference type="GO" id="GO:0006351">
    <property type="term" value="P:DNA-templated transcription"/>
    <property type="evidence" value="ECO:0007669"/>
    <property type="project" value="UniProtKB-UniRule"/>
</dbReference>
<dbReference type="CDD" id="cd02655">
    <property type="entry name" value="RNAP_beta'_C"/>
    <property type="match status" value="1"/>
</dbReference>
<dbReference type="CDD" id="cd01609">
    <property type="entry name" value="RNAP_beta'_N"/>
    <property type="match status" value="1"/>
</dbReference>
<dbReference type="FunFam" id="1.10.132.30:FF:000003">
    <property type="entry name" value="DNA-directed RNA polymerase subunit beta"/>
    <property type="match status" value="1"/>
</dbReference>
<dbReference type="FunFam" id="1.10.150.390:FF:000002">
    <property type="entry name" value="DNA-directed RNA polymerase subunit beta"/>
    <property type="match status" value="1"/>
</dbReference>
<dbReference type="FunFam" id="4.10.860.120:FF:000001">
    <property type="entry name" value="DNA-directed RNA polymerase subunit beta"/>
    <property type="match status" value="1"/>
</dbReference>
<dbReference type="Gene3D" id="1.10.132.30">
    <property type="match status" value="1"/>
</dbReference>
<dbReference type="Gene3D" id="1.10.150.390">
    <property type="match status" value="1"/>
</dbReference>
<dbReference type="Gene3D" id="1.10.1790.20">
    <property type="match status" value="1"/>
</dbReference>
<dbReference type="Gene3D" id="1.10.40.90">
    <property type="match status" value="1"/>
</dbReference>
<dbReference type="Gene3D" id="2.40.40.20">
    <property type="match status" value="1"/>
</dbReference>
<dbReference type="Gene3D" id="2.40.50.100">
    <property type="match status" value="3"/>
</dbReference>
<dbReference type="Gene3D" id="4.10.860.120">
    <property type="entry name" value="RNA polymerase II, clamp domain"/>
    <property type="match status" value="1"/>
</dbReference>
<dbReference type="Gene3D" id="1.10.274.100">
    <property type="entry name" value="RNA polymerase Rpb1, domain 3"/>
    <property type="match status" value="2"/>
</dbReference>
<dbReference type="HAMAP" id="MF_01322">
    <property type="entry name" value="RNApol_bact_RpoC"/>
    <property type="match status" value="1"/>
</dbReference>
<dbReference type="InterPro" id="IPR045867">
    <property type="entry name" value="DNA-dir_RpoC_beta_prime"/>
</dbReference>
<dbReference type="InterPro" id="IPR012754">
    <property type="entry name" value="DNA-dir_RpoC_beta_prime_bact"/>
</dbReference>
<dbReference type="InterPro" id="IPR000722">
    <property type="entry name" value="RNA_pol_asu"/>
</dbReference>
<dbReference type="InterPro" id="IPR006592">
    <property type="entry name" value="RNA_pol_N"/>
</dbReference>
<dbReference type="InterPro" id="IPR007080">
    <property type="entry name" value="RNA_pol_Rpb1_1"/>
</dbReference>
<dbReference type="InterPro" id="IPR007066">
    <property type="entry name" value="RNA_pol_Rpb1_3"/>
</dbReference>
<dbReference type="InterPro" id="IPR042102">
    <property type="entry name" value="RNA_pol_Rpb1_3_sf"/>
</dbReference>
<dbReference type="InterPro" id="IPR007083">
    <property type="entry name" value="RNA_pol_Rpb1_4"/>
</dbReference>
<dbReference type="InterPro" id="IPR007081">
    <property type="entry name" value="RNA_pol_Rpb1_5"/>
</dbReference>
<dbReference type="InterPro" id="IPR044893">
    <property type="entry name" value="RNA_pol_Rpb1_clamp_domain"/>
</dbReference>
<dbReference type="InterPro" id="IPR038120">
    <property type="entry name" value="Rpb1_funnel_sf"/>
</dbReference>
<dbReference type="NCBIfam" id="TIGR02386">
    <property type="entry name" value="rpoC_TIGR"/>
    <property type="match status" value="1"/>
</dbReference>
<dbReference type="PANTHER" id="PTHR19376">
    <property type="entry name" value="DNA-DIRECTED RNA POLYMERASE"/>
    <property type="match status" value="1"/>
</dbReference>
<dbReference type="PANTHER" id="PTHR19376:SF54">
    <property type="entry name" value="DNA-DIRECTED RNA POLYMERASE SUBUNIT BETA"/>
    <property type="match status" value="1"/>
</dbReference>
<dbReference type="Pfam" id="PF04997">
    <property type="entry name" value="RNA_pol_Rpb1_1"/>
    <property type="match status" value="1"/>
</dbReference>
<dbReference type="Pfam" id="PF00623">
    <property type="entry name" value="RNA_pol_Rpb1_2"/>
    <property type="match status" value="1"/>
</dbReference>
<dbReference type="Pfam" id="PF04983">
    <property type="entry name" value="RNA_pol_Rpb1_3"/>
    <property type="match status" value="1"/>
</dbReference>
<dbReference type="Pfam" id="PF05000">
    <property type="entry name" value="RNA_pol_Rpb1_4"/>
    <property type="match status" value="1"/>
</dbReference>
<dbReference type="Pfam" id="PF04998">
    <property type="entry name" value="RNA_pol_Rpb1_5"/>
    <property type="match status" value="1"/>
</dbReference>
<dbReference type="SMART" id="SM00663">
    <property type="entry name" value="RPOLA_N"/>
    <property type="match status" value="1"/>
</dbReference>
<dbReference type="SUPFAM" id="SSF64484">
    <property type="entry name" value="beta and beta-prime subunits of DNA dependent RNA-polymerase"/>
    <property type="match status" value="1"/>
</dbReference>
<feature type="chain" id="PRO_0000240811" description="DNA-directed RNA polymerase subunit beta'">
    <location>
        <begin position="1"/>
        <end position="1408"/>
    </location>
</feature>
<feature type="region of interest" description="Disordered" evidence="2">
    <location>
        <begin position="1386"/>
        <end position="1408"/>
    </location>
</feature>
<feature type="binding site" evidence="1">
    <location>
        <position position="70"/>
    </location>
    <ligand>
        <name>Zn(2+)</name>
        <dbReference type="ChEBI" id="CHEBI:29105"/>
        <label>1</label>
    </ligand>
</feature>
<feature type="binding site" evidence="1">
    <location>
        <position position="72"/>
    </location>
    <ligand>
        <name>Zn(2+)</name>
        <dbReference type="ChEBI" id="CHEBI:29105"/>
        <label>1</label>
    </ligand>
</feature>
<feature type="binding site" evidence="1">
    <location>
        <position position="85"/>
    </location>
    <ligand>
        <name>Zn(2+)</name>
        <dbReference type="ChEBI" id="CHEBI:29105"/>
        <label>1</label>
    </ligand>
</feature>
<feature type="binding site" evidence="1">
    <location>
        <position position="88"/>
    </location>
    <ligand>
        <name>Zn(2+)</name>
        <dbReference type="ChEBI" id="CHEBI:29105"/>
        <label>1</label>
    </ligand>
</feature>
<feature type="binding site" evidence="1">
    <location>
        <position position="460"/>
    </location>
    <ligand>
        <name>Mg(2+)</name>
        <dbReference type="ChEBI" id="CHEBI:18420"/>
    </ligand>
</feature>
<feature type="binding site" evidence="1">
    <location>
        <position position="462"/>
    </location>
    <ligand>
        <name>Mg(2+)</name>
        <dbReference type="ChEBI" id="CHEBI:18420"/>
    </ligand>
</feature>
<feature type="binding site" evidence="1">
    <location>
        <position position="464"/>
    </location>
    <ligand>
        <name>Mg(2+)</name>
        <dbReference type="ChEBI" id="CHEBI:18420"/>
    </ligand>
</feature>
<feature type="binding site" evidence="1">
    <location>
        <position position="822"/>
    </location>
    <ligand>
        <name>Zn(2+)</name>
        <dbReference type="ChEBI" id="CHEBI:29105"/>
        <label>2</label>
    </ligand>
</feature>
<feature type="binding site" evidence="1">
    <location>
        <position position="896"/>
    </location>
    <ligand>
        <name>Zn(2+)</name>
        <dbReference type="ChEBI" id="CHEBI:29105"/>
        <label>2</label>
    </ligand>
</feature>
<feature type="binding site" evidence="1">
    <location>
        <position position="903"/>
    </location>
    <ligand>
        <name>Zn(2+)</name>
        <dbReference type="ChEBI" id="CHEBI:29105"/>
        <label>2</label>
    </ligand>
</feature>
<feature type="binding site" evidence="1">
    <location>
        <position position="906"/>
    </location>
    <ligand>
        <name>Zn(2+)</name>
        <dbReference type="ChEBI" id="CHEBI:29105"/>
        <label>2</label>
    </ligand>
</feature>
<name>RPOC_NITMU</name>
<sequence length="1408" mass="156214">MKALLDLFKQVTQKEEFDSIKIGLASPEKIRSWSYGEVKKPETINYRTFKPERDGLFCAKIFGPVKDYECLCGKYKRLKHRGVICEKCGVEVTLSKVRRERMGHIELASPVAHIWFLKSLPSRLGMVLDMTLRDIERVLYFEAYVVTDPGLTPLQRCQLLTDDDYRAKTEEYGDDFRASMGAEGIRDLLNTLNIRVEIDDLRREMGTTGSETKMKKISKRLKVLEAFSKSGIKPEWMILAVLPVLPPELRPLVPLDGGRFATSDLNDLYRRVINRNNRLKRLLELKAPEIIVRNEKRMLQEAVDSLLDNGRRGKAMTGANKRPLKSLADMIKGKGGRFRQNLLGKRVDYSGRSVIVVGPQLKLHQCGLPKKMALELFKPFIFNKLEIMGIASTIKAAKREVENESPIVWDILEDVIREHPVMLNRAPTLHRLGIQAFEPVLIEGKAIQLHPLVCAAFNADFDGDQMAVHVPLSLEAQMECRTLMMSTNNVLSPANGEPIIVPSQDIVLGLYYTTREKVNARGEGMYFANISEVSRAYENRVIELNARIFVRIREYELADGERREKITRYETTVGRALLSEILPAGLPFPLINKVLKKKEISKLINASFRRCGLRETVIFADKLMYAGFSYATRAGISICLDDMLTPAQKDAIISASEKEVQEIELQYTSGLVTQGERYNKVVDIWGRAGDQVAKAMMDQLGVEPIIDPETGTAKTGESGKPLIQESFNSIYMMADSGARGSAAQIRQLAGMRGLMAKPDGSIIETPITANFREGLNVLQYFISTHGARKGLADTALKTANSGYLTRRLVDVTQDLVVTQEDCGTSNGVVMKALVEGGEVIEALRERILGRVVANDIINPEHQAVIYPAGMLLDENAVDTIEMLGIDEVKVRTPLTCETRYGLCAKCYGRDLGRGTPVNVGEAVGVIAAQSIGEPGTQLTMRTFHIGGAASRTAVASQVESKSNGIVRYSPTMRYVTNARNELIAISRSGEVVIQDDNGRERERHKAPYGATLLIRDGEVVKAGQVLAAWDPHTRPIITEYSGKVRFENVEEGVTVAKQIDEVTGLSTLVVIDPKRRGVVQTKGLRPVVKLLDEEGKEVRLAGSNLPVHITFQVGSIITVRDGQQVSVGEVLARIPQESSKTRDITGGLPRVAELFEARSPKDAGVLAEVTGIVSFGKDTKGKQRLVITDLDGVSHEYLIPKDKHVTAHDGQVVNKGESIVDGPADPHDILRLLGVEALARYITDEVQDVYRLQGVKINDKHIEVIVRQMLRRVQIVDSGDTRFIPGEQVERAEMLAENEQVELEGKRPATYEYMLLGITKASLSTDSFISAASFQETTRVLTEAAIMGKKDDLRGLKENVIVGRLIPAGTGLTFHNTRKRQRLMLDTGEAPPLSEEETGEIRNSGYAV</sequence>
<gene>
    <name evidence="1" type="primary">rpoC</name>
    <name type="ordered locus">Nmul_A0760</name>
</gene>
<proteinExistence type="inferred from homology"/>
<evidence type="ECO:0000255" key="1">
    <source>
        <dbReference type="HAMAP-Rule" id="MF_01322"/>
    </source>
</evidence>
<evidence type="ECO:0000256" key="2">
    <source>
        <dbReference type="SAM" id="MobiDB-lite"/>
    </source>
</evidence>